<sequence>MNRKVLKVIDGETVFPPPIWMMRQAGRYLPEYRETRKKAGSFLDLCYSPDLAVEVTLQPIRRFGFDAAILFSDILVVPHALGRDLRFEEGKGPLMTPIDADEIFWLETEGVAKRLEPVYETVRLVREQLPDETTLLGFCGAPWTVATYMIAGHGTPDQAPARLFAYRFPEAFEKLLNDLADVSAEYLIEQLGAGADAVQIFDSWSGVLDEDCFERFCIRLVARIVQKVRAVYPQARIIGFPKGAGMLYAGYREKTGVDMLGLDWSVPLSFAALLQEEGAVQGNLDPLRVVAGGNALDEGVDAILERMGQGPLVFNLGHGITPQAPIENVQRMIDRVRGGKS</sequence>
<proteinExistence type="inferred from homology"/>
<name>DCUP_BRUO2</name>
<evidence type="ECO:0000255" key="1">
    <source>
        <dbReference type="HAMAP-Rule" id="MF_00218"/>
    </source>
</evidence>
<organism>
    <name type="scientific">Brucella ovis (strain ATCC 25840 / 63/290 / NCTC 10512)</name>
    <dbReference type="NCBI Taxonomy" id="444178"/>
    <lineage>
        <taxon>Bacteria</taxon>
        <taxon>Pseudomonadati</taxon>
        <taxon>Pseudomonadota</taxon>
        <taxon>Alphaproteobacteria</taxon>
        <taxon>Hyphomicrobiales</taxon>
        <taxon>Brucellaceae</taxon>
        <taxon>Brucella/Ochrobactrum group</taxon>
        <taxon>Brucella</taxon>
    </lineage>
</organism>
<comment type="function">
    <text evidence="1">Catalyzes the decarboxylation of four acetate groups of uroporphyrinogen-III to yield coproporphyrinogen-III.</text>
</comment>
<comment type="catalytic activity">
    <reaction evidence="1">
        <text>uroporphyrinogen III + 4 H(+) = coproporphyrinogen III + 4 CO2</text>
        <dbReference type="Rhea" id="RHEA:19865"/>
        <dbReference type="ChEBI" id="CHEBI:15378"/>
        <dbReference type="ChEBI" id="CHEBI:16526"/>
        <dbReference type="ChEBI" id="CHEBI:57308"/>
        <dbReference type="ChEBI" id="CHEBI:57309"/>
        <dbReference type="EC" id="4.1.1.37"/>
    </reaction>
</comment>
<comment type="pathway">
    <text evidence="1">Porphyrin-containing compound metabolism; protoporphyrin-IX biosynthesis; coproporphyrinogen-III from 5-aminolevulinate: step 4/4.</text>
</comment>
<comment type="subunit">
    <text evidence="1">Homodimer.</text>
</comment>
<comment type="subcellular location">
    <subcellularLocation>
        <location evidence="1">Cytoplasm</location>
    </subcellularLocation>
</comment>
<comment type="similarity">
    <text evidence="1">Belongs to the uroporphyrinogen decarboxylase family.</text>
</comment>
<keyword id="KW-0963">Cytoplasm</keyword>
<keyword id="KW-0210">Decarboxylase</keyword>
<keyword id="KW-0456">Lyase</keyword>
<keyword id="KW-0627">Porphyrin biosynthesis</keyword>
<gene>
    <name evidence="1" type="primary">hemE</name>
    <name type="ordered locus">BOV_1986</name>
</gene>
<reference key="1">
    <citation type="journal article" date="2009" name="PLoS ONE">
        <title>Genome degradation in Brucella ovis corresponds with narrowing of its host range and tissue tropism.</title>
        <authorList>
            <person name="Tsolis R.M."/>
            <person name="Seshadri R."/>
            <person name="Santos R.L."/>
            <person name="Sangari F.J."/>
            <person name="Lobo J.M."/>
            <person name="de Jong M.F."/>
            <person name="Ren Q."/>
            <person name="Myers G."/>
            <person name="Brinkac L.M."/>
            <person name="Nelson W.C."/>
            <person name="Deboy R.T."/>
            <person name="Angiuoli S."/>
            <person name="Khouri H."/>
            <person name="Dimitrov G."/>
            <person name="Robinson J.R."/>
            <person name="Mulligan S."/>
            <person name="Walker R.L."/>
            <person name="Elzer P.E."/>
            <person name="Hassan K.A."/>
            <person name="Paulsen I.T."/>
        </authorList>
    </citation>
    <scope>NUCLEOTIDE SEQUENCE [LARGE SCALE GENOMIC DNA]</scope>
    <source>
        <strain>ATCC 25840 / 63/290 / NCTC 10512</strain>
    </source>
</reference>
<accession>A5VT24</accession>
<feature type="chain" id="PRO_1000023878" description="Uroporphyrinogen decarboxylase">
    <location>
        <begin position="1"/>
        <end position="341"/>
    </location>
</feature>
<feature type="binding site" evidence="1">
    <location>
        <begin position="23"/>
        <end position="27"/>
    </location>
    <ligand>
        <name>substrate</name>
    </ligand>
</feature>
<feature type="binding site" evidence="1">
    <location>
        <position position="73"/>
    </location>
    <ligand>
        <name>substrate</name>
    </ligand>
</feature>
<feature type="binding site" evidence="1">
    <location>
        <position position="148"/>
    </location>
    <ligand>
        <name>substrate</name>
    </ligand>
</feature>
<feature type="binding site" evidence="1">
    <location>
        <position position="203"/>
    </location>
    <ligand>
        <name>substrate</name>
    </ligand>
</feature>
<feature type="binding site" evidence="1">
    <location>
        <position position="318"/>
    </location>
    <ligand>
        <name>substrate</name>
    </ligand>
</feature>
<feature type="site" description="Transition state stabilizer" evidence="1">
    <location>
        <position position="73"/>
    </location>
</feature>
<dbReference type="EC" id="4.1.1.37" evidence="1"/>
<dbReference type="EMBL" id="CP000708">
    <property type="protein sequence ID" value="ABQ60710.1"/>
    <property type="molecule type" value="Genomic_DNA"/>
</dbReference>
<dbReference type="RefSeq" id="WP_006014457.1">
    <property type="nucleotide sequence ID" value="NC_009505.1"/>
</dbReference>
<dbReference type="SMR" id="A5VT24"/>
<dbReference type="GeneID" id="45125320"/>
<dbReference type="KEGG" id="bov:BOV_1986"/>
<dbReference type="HOGENOM" id="CLU_040933_0_0_5"/>
<dbReference type="PhylomeDB" id="A5VT24"/>
<dbReference type="UniPathway" id="UPA00251">
    <property type="reaction ID" value="UER00321"/>
</dbReference>
<dbReference type="Proteomes" id="UP000006383">
    <property type="component" value="Chromosome I"/>
</dbReference>
<dbReference type="GO" id="GO:0005829">
    <property type="term" value="C:cytosol"/>
    <property type="evidence" value="ECO:0007669"/>
    <property type="project" value="TreeGrafter"/>
</dbReference>
<dbReference type="GO" id="GO:0004853">
    <property type="term" value="F:uroporphyrinogen decarboxylase activity"/>
    <property type="evidence" value="ECO:0007669"/>
    <property type="project" value="UniProtKB-UniRule"/>
</dbReference>
<dbReference type="GO" id="GO:0019353">
    <property type="term" value="P:protoporphyrinogen IX biosynthetic process from glutamate"/>
    <property type="evidence" value="ECO:0007669"/>
    <property type="project" value="TreeGrafter"/>
</dbReference>
<dbReference type="CDD" id="cd00717">
    <property type="entry name" value="URO-D"/>
    <property type="match status" value="1"/>
</dbReference>
<dbReference type="FunFam" id="3.20.20.210:FF:000007">
    <property type="entry name" value="Uroporphyrinogen decarboxylase"/>
    <property type="match status" value="1"/>
</dbReference>
<dbReference type="Gene3D" id="3.20.20.210">
    <property type="match status" value="1"/>
</dbReference>
<dbReference type="HAMAP" id="MF_00218">
    <property type="entry name" value="URO_D"/>
    <property type="match status" value="1"/>
</dbReference>
<dbReference type="InterPro" id="IPR038071">
    <property type="entry name" value="UROD/MetE-like_sf"/>
</dbReference>
<dbReference type="InterPro" id="IPR006361">
    <property type="entry name" value="Uroporphyrinogen_deCO2ase_HemE"/>
</dbReference>
<dbReference type="InterPro" id="IPR000257">
    <property type="entry name" value="Uroporphyrinogen_deCOase"/>
</dbReference>
<dbReference type="NCBIfam" id="TIGR01464">
    <property type="entry name" value="hemE"/>
    <property type="match status" value="1"/>
</dbReference>
<dbReference type="PANTHER" id="PTHR21091">
    <property type="entry name" value="METHYLTETRAHYDROFOLATE:HOMOCYSTEINE METHYLTRANSFERASE RELATED"/>
    <property type="match status" value="1"/>
</dbReference>
<dbReference type="PANTHER" id="PTHR21091:SF169">
    <property type="entry name" value="UROPORPHYRINOGEN DECARBOXYLASE"/>
    <property type="match status" value="1"/>
</dbReference>
<dbReference type="Pfam" id="PF01208">
    <property type="entry name" value="URO-D"/>
    <property type="match status" value="1"/>
</dbReference>
<dbReference type="SUPFAM" id="SSF51726">
    <property type="entry name" value="UROD/MetE-like"/>
    <property type="match status" value="1"/>
</dbReference>
<dbReference type="PROSITE" id="PS00906">
    <property type="entry name" value="UROD_1"/>
    <property type="match status" value="1"/>
</dbReference>
<dbReference type="PROSITE" id="PS00907">
    <property type="entry name" value="UROD_2"/>
    <property type="match status" value="1"/>
</dbReference>
<protein>
    <recommendedName>
        <fullName evidence="1">Uroporphyrinogen decarboxylase</fullName>
        <shortName evidence="1">UPD</shortName>
        <shortName evidence="1">URO-D</shortName>
        <ecNumber evidence="1">4.1.1.37</ecNumber>
    </recommendedName>
</protein>